<comment type="function">
    <molecule>Corticotropin</molecule>
    <text>Stimulates the adrenal glands to release cortisol.</text>
</comment>
<comment type="function">
    <molecule>Melanocyte-stimulating hormone alpha</molecule>
    <text>Anorexigenic peptide. Increases the pigmentation of skin by increasing melanin production in melanocytes.</text>
</comment>
<comment type="function">
    <molecule>Melanocyte-stimulating hormone beta</molecule>
    <text evidence="4">Increases the pigmentation of skin by increasing melanin production in melanocytes.</text>
</comment>
<comment type="function">
    <molecule>Beta-endorphin</molecule>
    <text>Endogenous orexigenic opiate.</text>
</comment>
<comment type="function">
    <molecule>Met-enkephalin</molecule>
    <text>Endogenous opiate.</text>
</comment>
<comment type="subcellular location">
    <subcellularLocation>
        <location evidence="4">Secreted</location>
    </subcellularLocation>
    <text evidence="4">Melanocyte-stimulating hormone alpha and beta-endorphin are stored in separate granules in hypothalamic POMC neurons, suggesting that secretion may be under the control of different regulatory mechanisms.</text>
</comment>
<comment type="tissue specificity">
    <text>ACTH and MSH are produced by the pituitary gland.</text>
</comment>
<comment type="PTM">
    <text>Specific enzymatic cleavages at paired basic residues yield the different active peptides.</text>
</comment>
<comment type="similarity">
    <text evidence="6">Belongs to the POMC family.</text>
</comment>
<comment type="caution">
    <text evidence="6">X's at positions 40-41 represent paired basic residues (probably Lys-Arg) assumed, by homology with the bovine sequence, to be present in the precursor molecule.</text>
</comment>
<dbReference type="PIR" id="JK0022">
    <property type="entry name" value="JK0022"/>
</dbReference>
<dbReference type="BMRB" id="P21252"/>
<dbReference type="STRING" id="9785.ENSLAFP00000021554"/>
<dbReference type="InParanoid" id="P21252"/>
<dbReference type="Proteomes" id="UP000007646">
    <property type="component" value="Unassembled WGS sequence"/>
</dbReference>
<dbReference type="GO" id="GO:0005615">
    <property type="term" value="C:extracellular space"/>
    <property type="evidence" value="ECO:0007669"/>
    <property type="project" value="TreeGrafter"/>
</dbReference>
<dbReference type="GO" id="GO:0030141">
    <property type="term" value="C:secretory granule"/>
    <property type="evidence" value="ECO:0007669"/>
    <property type="project" value="TreeGrafter"/>
</dbReference>
<dbReference type="GO" id="GO:0001664">
    <property type="term" value="F:G protein-coupled receptor binding"/>
    <property type="evidence" value="ECO:0007669"/>
    <property type="project" value="TreeGrafter"/>
</dbReference>
<dbReference type="GO" id="GO:0005179">
    <property type="term" value="F:hormone activity"/>
    <property type="evidence" value="ECO:0007669"/>
    <property type="project" value="UniProtKB-KW"/>
</dbReference>
<dbReference type="GO" id="GO:0007218">
    <property type="term" value="P:neuropeptide signaling pathway"/>
    <property type="evidence" value="ECO:0007669"/>
    <property type="project" value="UniProtKB-KW"/>
</dbReference>
<dbReference type="GO" id="GO:2000852">
    <property type="term" value="P:regulation of corticosterone secretion"/>
    <property type="evidence" value="ECO:0007669"/>
    <property type="project" value="TreeGrafter"/>
</dbReference>
<dbReference type="InterPro" id="IPR013531">
    <property type="entry name" value="Mcrtin_ACTH_cent"/>
</dbReference>
<dbReference type="InterPro" id="IPR013532">
    <property type="entry name" value="Opioid_neuropept"/>
</dbReference>
<dbReference type="InterPro" id="IPR001941">
    <property type="entry name" value="PMOC"/>
</dbReference>
<dbReference type="InterPro" id="IPR050878">
    <property type="entry name" value="POMC-derived_peptides"/>
</dbReference>
<dbReference type="PANTHER" id="PTHR11416">
    <property type="entry name" value="PRO-OPIOMELANOCORTIN"/>
    <property type="match status" value="1"/>
</dbReference>
<dbReference type="PANTHER" id="PTHR11416:SF7">
    <property type="entry name" value="PRO-OPIOMELANOCORTIN"/>
    <property type="match status" value="1"/>
</dbReference>
<dbReference type="Pfam" id="PF00976">
    <property type="entry name" value="ACTH_domain"/>
    <property type="match status" value="2"/>
</dbReference>
<dbReference type="Pfam" id="PF08035">
    <property type="entry name" value="Op_neuropeptide"/>
    <property type="match status" value="1"/>
</dbReference>
<dbReference type="PRINTS" id="PR00383">
    <property type="entry name" value="MELANOCORTIN"/>
</dbReference>
<dbReference type="SMART" id="SM01363">
    <property type="entry name" value="ACTH_domain"/>
    <property type="match status" value="2"/>
</dbReference>
<dbReference type="SMART" id="SM01365">
    <property type="entry name" value="Op_neuropeptide"/>
    <property type="match status" value="1"/>
</dbReference>
<name>COLI_LOXAF</name>
<gene>
    <name type="primary">POMC</name>
</gene>
<accession>P21252</accession>
<sequence>SYSMEHFRWGKPVGKKRRPVKVYPNGAEGESAEAFPLEFXXELARERPEPARGPEGPDEGAATQADLDNGLVAEVEATSAEKKDEGPYKMEHFRWGSPAKDKRYGGFMTSEKSQTPLVTLFKNAIIKNAYKKGH</sequence>
<protein>
    <recommendedName>
        <fullName>Pro-opiomelanocortin</fullName>
        <shortName>POMC</shortName>
    </recommendedName>
    <alternativeName>
        <fullName>Corticotropin-lipotropin</fullName>
    </alternativeName>
    <component>
        <recommendedName>
            <fullName>Corticotropin</fullName>
        </recommendedName>
        <alternativeName>
            <fullName>Adrenocorticotropic hormone</fullName>
            <shortName>ACTH</shortName>
        </alternativeName>
    </component>
    <component>
        <recommendedName>
            <fullName>Melanocyte-stimulating hormone alpha</fullName>
            <shortName>Alpha-MSH</shortName>
        </recommendedName>
        <alternativeName>
            <fullName>Melanotropin alpha</fullName>
        </alternativeName>
    </component>
    <component>
        <recommendedName>
            <fullName>Corticotropin-like intermediary peptide</fullName>
            <shortName>CLIP</shortName>
        </recommendedName>
    </component>
    <component>
        <recommendedName>
            <fullName>Lipotropin beta</fullName>
        </recommendedName>
        <alternativeName>
            <fullName>Beta-LPH</fullName>
        </alternativeName>
    </component>
    <component>
        <recommendedName>
            <fullName>Lipotropin gamma</fullName>
        </recommendedName>
        <alternativeName>
            <fullName>Gamma-LPH</fullName>
        </alternativeName>
    </component>
    <component>
        <recommendedName>
            <fullName>Melanocyte-stimulating hormone beta</fullName>
            <shortName>Beta-MSH</shortName>
        </recommendedName>
        <alternativeName>
            <fullName>Melanotropin beta</fullName>
        </alternativeName>
    </component>
    <component>
        <recommendedName>
            <fullName>Beta-endorphin</fullName>
        </recommendedName>
    </component>
    <component>
        <recommendedName>
            <fullName>Met-enkephalin</fullName>
        </recommendedName>
    </component>
</protein>
<organism>
    <name type="scientific">Loxodonta africana</name>
    <name type="common">African elephant</name>
    <dbReference type="NCBI Taxonomy" id="9785"/>
    <lineage>
        <taxon>Eukaryota</taxon>
        <taxon>Metazoa</taxon>
        <taxon>Chordata</taxon>
        <taxon>Craniata</taxon>
        <taxon>Vertebrata</taxon>
        <taxon>Euteleostomi</taxon>
        <taxon>Mammalia</taxon>
        <taxon>Eutheria</taxon>
        <taxon>Afrotheria</taxon>
        <taxon>Proboscidea</taxon>
        <taxon>Elephantidae</taxon>
        <taxon>Loxodonta</taxon>
    </lineage>
</organism>
<reference key="1">
    <citation type="journal article" date="1988" name="Int. J. Pept. Protein Res.">
        <title>Isolation and primary structures of elephant adrenocorticotropin and beta-lipotropin.</title>
        <authorList>
            <person name="Li C.H."/>
            <person name="Oosthuizen M.M.J."/>
            <person name="Chung D."/>
        </authorList>
    </citation>
    <scope>PROTEIN SEQUENCE</scope>
</reference>
<evidence type="ECO:0000250" key="1">
    <source>
        <dbReference type="UniProtKB" id="P01189"/>
    </source>
</evidence>
<evidence type="ECO:0000250" key="2">
    <source>
        <dbReference type="UniProtKB" id="P01190"/>
    </source>
</evidence>
<evidence type="ECO:0000250" key="3">
    <source>
        <dbReference type="UniProtKB" id="P01191"/>
    </source>
</evidence>
<evidence type="ECO:0000250" key="4">
    <source>
        <dbReference type="UniProtKB" id="P01193"/>
    </source>
</evidence>
<evidence type="ECO:0000256" key="5">
    <source>
        <dbReference type="SAM" id="MobiDB-lite"/>
    </source>
</evidence>
<evidence type="ECO:0000305" key="6"/>
<keyword id="KW-0007">Acetylation</keyword>
<keyword id="KW-0027">Amidation</keyword>
<keyword id="KW-0165">Cleavage on pair of basic residues</keyword>
<keyword id="KW-0903">Direct protein sequencing</keyword>
<keyword id="KW-0257">Endorphin</keyword>
<keyword id="KW-0372">Hormone</keyword>
<keyword id="KW-0597">Phosphoprotein</keyword>
<keyword id="KW-1185">Reference proteome</keyword>
<keyword id="KW-0964">Secreted</keyword>
<feature type="peptide" id="PRO_0000024977" description="Corticotropin">
    <location>
        <begin position="1"/>
        <end position="39"/>
    </location>
</feature>
<feature type="peptide" id="PRO_0000024978" description="Melanocyte-stimulating hormone alpha">
    <location>
        <begin position="1"/>
        <end position="13"/>
    </location>
</feature>
<feature type="peptide" id="PRO_0000024979" description="Corticotropin-like intermediary peptide">
    <location>
        <begin position="19"/>
        <end position="39"/>
    </location>
</feature>
<feature type="peptide" id="PRO_0000024980" description="Lipotropin beta">
    <location>
        <begin position="42"/>
        <end position="134"/>
    </location>
</feature>
<feature type="peptide" id="PRO_0000024981" description="Lipotropin gamma">
    <location>
        <begin position="42"/>
        <end position="101"/>
    </location>
</feature>
<feature type="peptide" id="PRO_0000024982" description="Melanocyte-stimulating hormone beta">
    <location>
        <begin position="84"/>
        <end position="101"/>
    </location>
</feature>
<feature type="peptide" id="PRO_0000024983" description="Beta-endorphin">
    <location>
        <begin position="104"/>
        <end position="134"/>
    </location>
</feature>
<feature type="peptide" id="PRO_0000024984" description="Met-enkephalin">
    <location>
        <begin position="104"/>
        <end position="108"/>
    </location>
</feature>
<feature type="region of interest" description="Disordered" evidence="5">
    <location>
        <begin position="43"/>
        <end position="107"/>
    </location>
</feature>
<feature type="compositionally biased region" description="Basic and acidic residues" evidence="5">
    <location>
        <begin position="43"/>
        <end position="52"/>
    </location>
</feature>
<feature type="compositionally biased region" description="Basic and acidic residues" evidence="5">
    <location>
        <begin position="79"/>
        <end position="104"/>
    </location>
</feature>
<feature type="modified residue" description="N-acetylserine" evidence="3">
    <location>
        <position position="1"/>
    </location>
</feature>
<feature type="modified residue" description="Valine amide" evidence="2">
    <location>
        <position position="13"/>
    </location>
</feature>
<feature type="modified residue" description="Phosphoserine" evidence="1">
    <location>
        <position position="31"/>
    </location>
</feature>
<feature type="non-terminal residue">
    <location>
        <position position="1"/>
    </location>
</feature>
<proteinExistence type="evidence at protein level"/>